<proteinExistence type="predicted"/>
<keyword id="KW-0238">DNA-binding</keyword>
<keyword id="KW-0804">Transcription</keyword>
<keyword id="KW-0805">Transcription regulation</keyword>
<name>PHNR_SALTI</name>
<sequence>MKSIPGDIPQYLLIKAQLQARIQSGALKSGDKLPSERELCAIFNTTRITIRESLAQLESSGLIWRADRRGWFVTPERLWLDPTQNTNFHKLCREQGREPKTALLSGVLTTVPVEVMEPLQLQPFDQIYLLTRLRYADGRAVCYCENHCLPARVPELLQYDLNGSLTEVYESHYNLVYTSMHLSFYPTAMPAQAAQALGVMEGRPALLLRRLNYDQHGRVLDLDIEYWRHDSLRIEVDTH</sequence>
<reference key="1">
    <citation type="journal article" date="2003" name="J. Bacteriol.">
        <title>Comparative genomics of Salmonella enterica serovar Typhi strains Ty2 and CT18.</title>
        <authorList>
            <person name="Deng W."/>
            <person name="Liou S.-R."/>
            <person name="Plunkett G. III"/>
            <person name="Mayhew G.F."/>
            <person name="Rose D.J."/>
            <person name="Burland V."/>
            <person name="Kodoyianni V."/>
            <person name="Schwartz D.C."/>
            <person name="Blattner F.R."/>
        </authorList>
    </citation>
    <scope>NUCLEOTIDE SEQUENCE [LARGE SCALE GENOMIC DNA]</scope>
    <source>
        <strain>ATCC 700931 / Ty2</strain>
    </source>
</reference>
<reference key="2">
    <citation type="journal article" date="2001" name="Nature">
        <title>Complete genome sequence of a multiple drug resistant Salmonella enterica serovar Typhi CT18.</title>
        <authorList>
            <person name="Parkhill J."/>
            <person name="Dougan G."/>
            <person name="James K.D."/>
            <person name="Thomson N.R."/>
            <person name="Pickard D."/>
            <person name="Wain J."/>
            <person name="Churcher C.M."/>
            <person name="Mungall K.L."/>
            <person name="Bentley S.D."/>
            <person name="Holden M.T.G."/>
            <person name="Sebaihia M."/>
            <person name="Baker S."/>
            <person name="Basham D."/>
            <person name="Brooks K."/>
            <person name="Chillingworth T."/>
            <person name="Connerton P."/>
            <person name="Cronin A."/>
            <person name="Davis P."/>
            <person name="Davies R.M."/>
            <person name="Dowd L."/>
            <person name="White N."/>
            <person name="Farrar J."/>
            <person name="Feltwell T."/>
            <person name="Hamlin N."/>
            <person name="Haque A."/>
            <person name="Hien T.T."/>
            <person name="Holroyd S."/>
            <person name="Jagels K."/>
            <person name="Krogh A."/>
            <person name="Larsen T.S."/>
            <person name="Leather S."/>
            <person name="Moule S."/>
            <person name="O'Gaora P."/>
            <person name="Parry C."/>
            <person name="Quail M.A."/>
            <person name="Rutherford K.M."/>
            <person name="Simmonds M."/>
            <person name="Skelton J."/>
            <person name="Stevens K."/>
            <person name="Whitehead S."/>
            <person name="Barrell B.G."/>
        </authorList>
    </citation>
    <scope>NUCLEOTIDE SEQUENCE [LARGE SCALE GENOMIC DNA]</scope>
    <source>
        <strain>CT18</strain>
    </source>
</reference>
<evidence type="ECO:0000255" key="1">
    <source>
        <dbReference type="PROSITE-ProRule" id="PRU00307"/>
    </source>
</evidence>
<gene>
    <name type="primary">phnR</name>
    <name type="ordered locus">STY0469</name>
    <name type="ordered locus">t2433</name>
</gene>
<feature type="chain" id="PRO_0000286733" description="Putative transcriptional regulator of 2-aminoethylphosphonate degradation operons">
    <location>
        <begin position="1"/>
        <end position="239"/>
    </location>
</feature>
<feature type="domain" description="HTH gntR-type" evidence="1">
    <location>
        <begin position="8"/>
        <end position="76"/>
    </location>
</feature>
<feature type="DNA-binding region" description="H-T-H motif" evidence="1">
    <location>
        <begin position="36"/>
        <end position="55"/>
    </location>
</feature>
<dbReference type="EMBL" id="AE014613">
    <property type="protein sequence ID" value="AAO70023.1"/>
    <property type="molecule type" value="Genomic_DNA"/>
</dbReference>
<dbReference type="EMBL" id="AL513382">
    <property type="protein sequence ID" value="CAD08886.1"/>
    <property type="molecule type" value="Genomic_DNA"/>
</dbReference>
<dbReference type="PIR" id="T46948">
    <property type="entry name" value="T46948"/>
</dbReference>
<dbReference type="RefSeq" id="NP_455024.1">
    <property type="nucleotide sequence ID" value="NC_003198.1"/>
</dbReference>
<dbReference type="RefSeq" id="WP_000836268.1">
    <property type="nucleotide sequence ID" value="NZ_WSUR01000026.1"/>
</dbReference>
<dbReference type="SMR" id="P96061"/>
<dbReference type="STRING" id="220341.gene:17584491"/>
<dbReference type="KEGG" id="stt:t2433"/>
<dbReference type="KEGG" id="sty:STY0469"/>
<dbReference type="PATRIC" id="fig|220341.7.peg.470"/>
<dbReference type="eggNOG" id="COG2188">
    <property type="taxonomic scope" value="Bacteria"/>
</dbReference>
<dbReference type="HOGENOM" id="CLU_063236_2_2_6"/>
<dbReference type="OMA" id="RINRDQH"/>
<dbReference type="OrthoDB" id="9784545at2"/>
<dbReference type="Proteomes" id="UP000000541">
    <property type="component" value="Chromosome"/>
</dbReference>
<dbReference type="Proteomes" id="UP000002670">
    <property type="component" value="Chromosome"/>
</dbReference>
<dbReference type="GO" id="GO:0003677">
    <property type="term" value="F:DNA binding"/>
    <property type="evidence" value="ECO:0007669"/>
    <property type="project" value="UniProtKB-KW"/>
</dbReference>
<dbReference type="GO" id="GO:0003700">
    <property type="term" value="F:DNA-binding transcription factor activity"/>
    <property type="evidence" value="ECO:0007669"/>
    <property type="project" value="InterPro"/>
</dbReference>
<dbReference type="GO" id="GO:0045892">
    <property type="term" value="P:negative regulation of DNA-templated transcription"/>
    <property type="evidence" value="ECO:0007669"/>
    <property type="project" value="TreeGrafter"/>
</dbReference>
<dbReference type="CDD" id="cd07377">
    <property type="entry name" value="WHTH_GntR"/>
    <property type="match status" value="1"/>
</dbReference>
<dbReference type="FunFam" id="1.10.10.10:FF:000287">
    <property type="entry name" value="Phosphonate utilization transcriptional regulator PhnR"/>
    <property type="match status" value="1"/>
</dbReference>
<dbReference type="FunFam" id="3.40.1410.10:FF:000010">
    <property type="entry name" value="Phosphonate utilization transcriptional regulator PhnR"/>
    <property type="match status" value="1"/>
</dbReference>
<dbReference type="Gene3D" id="3.40.1410.10">
    <property type="entry name" value="Chorismate lyase-like"/>
    <property type="match status" value="1"/>
</dbReference>
<dbReference type="Gene3D" id="1.10.10.10">
    <property type="entry name" value="Winged helix-like DNA-binding domain superfamily/Winged helix DNA-binding domain"/>
    <property type="match status" value="1"/>
</dbReference>
<dbReference type="InterPro" id="IPR050679">
    <property type="entry name" value="Bact_HTH_transcr_reg"/>
</dbReference>
<dbReference type="InterPro" id="IPR028978">
    <property type="entry name" value="Chorismate_lyase_/UTRA_dom_sf"/>
</dbReference>
<dbReference type="InterPro" id="IPR000524">
    <property type="entry name" value="Tscrpt_reg_HTH_GntR"/>
</dbReference>
<dbReference type="InterPro" id="IPR017722">
    <property type="entry name" value="Tscrpt_reg_PhnR"/>
</dbReference>
<dbReference type="InterPro" id="IPR011663">
    <property type="entry name" value="UTRA"/>
</dbReference>
<dbReference type="InterPro" id="IPR036388">
    <property type="entry name" value="WH-like_DNA-bd_sf"/>
</dbReference>
<dbReference type="InterPro" id="IPR036390">
    <property type="entry name" value="WH_DNA-bd_sf"/>
</dbReference>
<dbReference type="NCBIfam" id="TIGR03337">
    <property type="entry name" value="phnR"/>
    <property type="match status" value="1"/>
</dbReference>
<dbReference type="PANTHER" id="PTHR44846">
    <property type="entry name" value="MANNOSYL-D-GLYCERATE TRANSPORT/METABOLISM SYSTEM REPRESSOR MNGR-RELATED"/>
    <property type="match status" value="1"/>
</dbReference>
<dbReference type="PANTHER" id="PTHR44846:SF7">
    <property type="entry name" value="TRANSCRIPTIONAL REGULATOR OF 2-AMINOETHYLPHOSPHONATE DEGRADATION OPERONS-RELATED"/>
    <property type="match status" value="1"/>
</dbReference>
<dbReference type="Pfam" id="PF00392">
    <property type="entry name" value="GntR"/>
    <property type="match status" value="1"/>
</dbReference>
<dbReference type="Pfam" id="PF07702">
    <property type="entry name" value="UTRA"/>
    <property type="match status" value="1"/>
</dbReference>
<dbReference type="PRINTS" id="PR00035">
    <property type="entry name" value="HTHGNTR"/>
</dbReference>
<dbReference type="SMART" id="SM00345">
    <property type="entry name" value="HTH_GNTR"/>
    <property type="match status" value="1"/>
</dbReference>
<dbReference type="SMART" id="SM00866">
    <property type="entry name" value="UTRA"/>
    <property type="match status" value="1"/>
</dbReference>
<dbReference type="SUPFAM" id="SSF64288">
    <property type="entry name" value="Chorismate lyase-like"/>
    <property type="match status" value="1"/>
</dbReference>
<dbReference type="SUPFAM" id="SSF46785">
    <property type="entry name" value="Winged helix' DNA-binding domain"/>
    <property type="match status" value="1"/>
</dbReference>
<dbReference type="PROSITE" id="PS50949">
    <property type="entry name" value="HTH_GNTR"/>
    <property type="match status" value="1"/>
</dbReference>
<organism>
    <name type="scientific">Salmonella typhi</name>
    <dbReference type="NCBI Taxonomy" id="90370"/>
    <lineage>
        <taxon>Bacteria</taxon>
        <taxon>Pseudomonadati</taxon>
        <taxon>Pseudomonadota</taxon>
        <taxon>Gammaproteobacteria</taxon>
        <taxon>Enterobacterales</taxon>
        <taxon>Enterobacteriaceae</taxon>
        <taxon>Salmonella</taxon>
    </lineage>
</organism>
<accession>P96061</accession>
<accession>Q7ANG7</accession>
<protein>
    <recommendedName>
        <fullName>Putative transcriptional regulator of 2-aminoethylphosphonate degradation operons</fullName>
    </recommendedName>
</protein>